<accession>Q8E6A2</accession>
<evidence type="ECO:0000255" key="1">
    <source>
        <dbReference type="HAMAP-Rule" id="MF_00106"/>
    </source>
</evidence>
<reference key="1">
    <citation type="journal article" date="2002" name="Mol. Microbiol.">
        <title>Genome sequence of Streptococcus agalactiae, a pathogen causing invasive neonatal disease.</title>
        <authorList>
            <person name="Glaser P."/>
            <person name="Rusniok C."/>
            <person name="Buchrieser C."/>
            <person name="Chevalier F."/>
            <person name="Frangeul L."/>
            <person name="Msadek T."/>
            <person name="Zouine M."/>
            <person name="Couve E."/>
            <person name="Lalioui L."/>
            <person name="Poyart C."/>
            <person name="Trieu-Cuot P."/>
            <person name="Kunst F."/>
        </authorList>
    </citation>
    <scope>NUCLEOTIDE SEQUENCE [LARGE SCALE GENOMIC DNA]</scope>
    <source>
        <strain>NEM316</strain>
    </source>
</reference>
<organism>
    <name type="scientific">Streptococcus agalactiae serotype III (strain NEM316)</name>
    <dbReference type="NCBI Taxonomy" id="211110"/>
    <lineage>
        <taxon>Bacteria</taxon>
        <taxon>Bacillati</taxon>
        <taxon>Bacillota</taxon>
        <taxon>Bacilli</taxon>
        <taxon>Lactobacillales</taxon>
        <taxon>Streptococcaceae</taxon>
        <taxon>Streptococcus</taxon>
    </lineage>
</organism>
<name>UXUA_STRA3</name>
<gene>
    <name evidence="1" type="primary">uxuA</name>
    <name type="ordered locus">gbs0675</name>
</gene>
<comment type="function">
    <text evidence="1">Catalyzes the dehydration of D-mannonate.</text>
</comment>
<comment type="catalytic activity">
    <reaction evidence="1">
        <text>D-mannonate = 2-dehydro-3-deoxy-D-gluconate + H2O</text>
        <dbReference type="Rhea" id="RHEA:20097"/>
        <dbReference type="ChEBI" id="CHEBI:15377"/>
        <dbReference type="ChEBI" id="CHEBI:17767"/>
        <dbReference type="ChEBI" id="CHEBI:57990"/>
        <dbReference type="EC" id="4.2.1.8"/>
    </reaction>
</comment>
<comment type="cofactor">
    <cofactor evidence="1">
        <name>Fe(2+)</name>
        <dbReference type="ChEBI" id="CHEBI:29033"/>
    </cofactor>
    <cofactor evidence="1">
        <name>Mn(2+)</name>
        <dbReference type="ChEBI" id="CHEBI:29035"/>
    </cofactor>
</comment>
<comment type="pathway">
    <text evidence="1">Carbohydrate metabolism; pentose and glucuronate interconversion.</text>
</comment>
<comment type="similarity">
    <text evidence="1">Belongs to the mannonate dehydratase family.</text>
</comment>
<proteinExistence type="inferred from homology"/>
<dbReference type="EC" id="4.2.1.8" evidence="1"/>
<dbReference type="EMBL" id="AL766846">
    <property type="protein sequence ID" value="CAD46319.1"/>
    <property type="molecule type" value="Genomic_DNA"/>
</dbReference>
<dbReference type="RefSeq" id="WP_000426044.1">
    <property type="nucleotide sequence ID" value="NC_004368.1"/>
</dbReference>
<dbReference type="SMR" id="Q8E6A2"/>
<dbReference type="KEGG" id="san:gbs0675"/>
<dbReference type="eggNOG" id="COG1312">
    <property type="taxonomic scope" value="Bacteria"/>
</dbReference>
<dbReference type="HOGENOM" id="CLU_058621_1_0_9"/>
<dbReference type="UniPathway" id="UPA00246"/>
<dbReference type="Proteomes" id="UP000000823">
    <property type="component" value="Chromosome"/>
</dbReference>
<dbReference type="GO" id="GO:0008198">
    <property type="term" value="F:ferrous iron binding"/>
    <property type="evidence" value="ECO:0007669"/>
    <property type="project" value="TreeGrafter"/>
</dbReference>
<dbReference type="GO" id="GO:0030145">
    <property type="term" value="F:manganese ion binding"/>
    <property type="evidence" value="ECO:0007669"/>
    <property type="project" value="TreeGrafter"/>
</dbReference>
<dbReference type="GO" id="GO:0008927">
    <property type="term" value="F:mannonate dehydratase activity"/>
    <property type="evidence" value="ECO:0007669"/>
    <property type="project" value="UniProtKB-UniRule"/>
</dbReference>
<dbReference type="GO" id="GO:0042840">
    <property type="term" value="P:D-glucuronate catabolic process"/>
    <property type="evidence" value="ECO:0007669"/>
    <property type="project" value="TreeGrafter"/>
</dbReference>
<dbReference type="Gene3D" id="3.20.20.150">
    <property type="entry name" value="Divalent-metal-dependent TIM barrel enzymes"/>
    <property type="match status" value="1"/>
</dbReference>
<dbReference type="HAMAP" id="MF_00106">
    <property type="entry name" value="UxuA"/>
    <property type="match status" value="1"/>
</dbReference>
<dbReference type="InterPro" id="IPR004628">
    <property type="entry name" value="Man_deHydtase"/>
</dbReference>
<dbReference type="InterPro" id="IPR036237">
    <property type="entry name" value="Xyl_isomerase-like_sf"/>
</dbReference>
<dbReference type="NCBIfam" id="NF003027">
    <property type="entry name" value="PRK03906.1"/>
    <property type="match status" value="2"/>
</dbReference>
<dbReference type="NCBIfam" id="TIGR00695">
    <property type="entry name" value="uxuA"/>
    <property type="match status" value="1"/>
</dbReference>
<dbReference type="PANTHER" id="PTHR30387">
    <property type="entry name" value="MANNONATE DEHYDRATASE"/>
    <property type="match status" value="1"/>
</dbReference>
<dbReference type="PANTHER" id="PTHR30387:SF2">
    <property type="entry name" value="MANNONATE DEHYDRATASE"/>
    <property type="match status" value="1"/>
</dbReference>
<dbReference type="Pfam" id="PF03786">
    <property type="entry name" value="UxuA"/>
    <property type="match status" value="1"/>
</dbReference>
<dbReference type="PIRSF" id="PIRSF016049">
    <property type="entry name" value="Man_dehyd"/>
    <property type="match status" value="1"/>
</dbReference>
<dbReference type="SUPFAM" id="SSF51658">
    <property type="entry name" value="Xylose isomerase-like"/>
    <property type="match status" value="1"/>
</dbReference>
<feature type="chain" id="PRO_0000170687" description="Mannonate dehydratase">
    <location>
        <begin position="1"/>
        <end position="348"/>
    </location>
</feature>
<keyword id="KW-0408">Iron</keyword>
<keyword id="KW-0456">Lyase</keyword>
<keyword id="KW-0464">Manganese</keyword>
<protein>
    <recommendedName>
        <fullName evidence="1">Mannonate dehydratase</fullName>
        <ecNumber evidence="1">4.2.1.8</ecNumber>
    </recommendedName>
    <alternativeName>
        <fullName evidence="1">D-mannonate hydro-lyase</fullName>
    </alternativeName>
</protein>
<sequence length="348" mass="39263">MEMSFRWYGEDDPVTLENIGQIPTMKGIVTAIYDVPVGEVWSRERIQQLKEKVEAAGLKISVIESVPVHEDIKLGRPTRDLLIDNYIQTVKNLAAEGIDTICYNFMPVFDWTRTDLAYQYPDGSTALIFDETVSKKMDPVNGELSLPGWDASYSKEEMKAIMDAYAEIDEEKLWENLTYFIKRIIPEAEAVGVKMAIHPDDPPYSIFGLPRIITGLEAIERFVKLYDSKSNGITLCVGSYASDPQNDVLEISRRAFELDRVNFVHARNIKLGDGKSFKESAHPSEYGSIDMYEVIKLCHEFGFEGAIRPDHGRMIWGETGRPGYGLYDRALGATYLSGLYEAVIKGSK</sequence>